<feature type="chain" id="PRO_0000325249" description="Lipoyl synthase">
    <location>
        <begin position="1"/>
        <end position="324"/>
    </location>
</feature>
<feature type="domain" description="Radical SAM core" evidence="2">
    <location>
        <begin position="84"/>
        <end position="302"/>
    </location>
</feature>
<feature type="binding site" evidence="1">
    <location>
        <position position="72"/>
    </location>
    <ligand>
        <name>[4Fe-4S] cluster</name>
        <dbReference type="ChEBI" id="CHEBI:49883"/>
        <label>1</label>
    </ligand>
</feature>
<feature type="binding site" evidence="1">
    <location>
        <position position="77"/>
    </location>
    <ligand>
        <name>[4Fe-4S] cluster</name>
        <dbReference type="ChEBI" id="CHEBI:49883"/>
        <label>1</label>
    </ligand>
</feature>
<feature type="binding site" evidence="1">
    <location>
        <position position="83"/>
    </location>
    <ligand>
        <name>[4Fe-4S] cluster</name>
        <dbReference type="ChEBI" id="CHEBI:49883"/>
        <label>1</label>
    </ligand>
</feature>
<feature type="binding site" evidence="1">
    <location>
        <position position="98"/>
    </location>
    <ligand>
        <name>[4Fe-4S] cluster</name>
        <dbReference type="ChEBI" id="CHEBI:49883"/>
        <label>2</label>
        <note>4Fe-4S-S-AdoMet</note>
    </ligand>
</feature>
<feature type="binding site" evidence="1">
    <location>
        <position position="102"/>
    </location>
    <ligand>
        <name>[4Fe-4S] cluster</name>
        <dbReference type="ChEBI" id="CHEBI:49883"/>
        <label>2</label>
        <note>4Fe-4S-S-AdoMet</note>
    </ligand>
</feature>
<feature type="binding site" evidence="1">
    <location>
        <position position="105"/>
    </location>
    <ligand>
        <name>[4Fe-4S] cluster</name>
        <dbReference type="ChEBI" id="CHEBI:49883"/>
        <label>2</label>
        <note>4Fe-4S-S-AdoMet</note>
    </ligand>
</feature>
<feature type="binding site" evidence="1">
    <location>
        <position position="313"/>
    </location>
    <ligand>
        <name>[4Fe-4S] cluster</name>
        <dbReference type="ChEBI" id="CHEBI:49883"/>
        <label>1</label>
    </ligand>
</feature>
<keyword id="KW-0004">4Fe-4S</keyword>
<keyword id="KW-0963">Cytoplasm</keyword>
<keyword id="KW-0408">Iron</keyword>
<keyword id="KW-0411">Iron-sulfur</keyword>
<keyword id="KW-0479">Metal-binding</keyword>
<keyword id="KW-1185">Reference proteome</keyword>
<keyword id="KW-0949">S-adenosyl-L-methionine</keyword>
<keyword id="KW-0808">Transferase</keyword>
<reference key="1">
    <citation type="journal article" date="2007" name="Nat. Biotechnol.">
        <title>Genome sequence and identification of candidate vaccine antigens from the animal pathogen Dichelobacter nodosus.</title>
        <authorList>
            <person name="Myers G.S.A."/>
            <person name="Parker D."/>
            <person name="Al-Hasani K."/>
            <person name="Kennan R.M."/>
            <person name="Seemann T."/>
            <person name="Ren Q."/>
            <person name="Badger J.H."/>
            <person name="Selengut J.D."/>
            <person name="Deboy R.T."/>
            <person name="Tettelin H."/>
            <person name="Boyce J.D."/>
            <person name="McCarl V.P."/>
            <person name="Han X."/>
            <person name="Nelson W.C."/>
            <person name="Madupu R."/>
            <person name="Mohamoud Y."/>
            <person name="Holley T."/>
            <person name="Fedorova N."/>
            <person name="Khouri H."/>
            <person name="Bottomley S.P."/>
            <person name="Whittington R.J."/>
            <person name="Adler B."/>
            <person name="Songer J.G."/>
            <person name="Rood J.I."/>
            <person name="Paulsen I.T."/>
        </authorList>
    </citation>
    <scope>NUCLEOTIDE SEQUENCE [LARGE SCALE GENOMIC DNA]</scope>
    <source>
        <strain>VCS1703A</strain>
    </source>
</reference>
<comment type="function">
    <text evidence="1">Catalyzes the radical-mediated insertion of two sulfur atoms into the C-6 and C-8 positions of the octanoyl moiety bound to the lipoyl domains of lipoate-dependent enzymes, thereby converting the octanoylated domains into lipoylated derivatives.</text>
</comment>
<comment type="catalytic activity">
    <reaction evidence="1">
        <text>[[Fe-S] cluster scaffold protein carrying a second [4Fe-4S](2+) cluster] + N(6)-octanoyl-L-lysyl-[protein] + 2 oxidized [2Fe-2S]-[ferredoxin] + 2 S-adenosyl-L-methionine + 4 H(+) = [[Fe-S] cluster scaffold protein] + N(6)-[(R)-dihydrolipoyl]-L-lysyl-[protein] + 4 Fe(3+) + 2 hydrogen sulfide + 2 5'-deoxyadenosine + 2 L-methionine + 2 reduced [2Fe-2S]-[ferredoxin]</text>
        <dbReference type="Rhea" id="RHEA:16585"/>
        <dbReference type="Rhea" id="RHEA-COMP:9928"/>
        <dbReference type="Rhea" id="RHEA-COMP:10000"/>
        <dbReference type="Rhea" id="RHEA-COMP:10001"/>
        <dbReference type="Rhea" id="RHEA-COMP:10475"/>
        <dbReference type="Rhea" id="RHEA-COMP:14568"/>
        <dbReference type="Rhea" id="RHEA-COMP:14569"/>
        <dbReference type="ChEBI" id="CHEBI:15378"/>
        <dbReference type="ChEBI" id="CHEBI:17319"/>
        <dbReference type="ChEBI" id="CHEBI:29034"/>
        <dbReference type="ChEBI" id="CHEBI:29919"/>
        <dbReference type="ChEBI" id="CHEBI:33722"/>
        <dbReference type="ChEBI" id="CHEBI:33737"/>
        <dbReference type="ChEBI" id="CHEBI:33738"/>
        <dbReference type="ChEBI" id="CHEBI:57844"/>
        <dbReference type="ChEBI" id="CHEBI:59789"/>
        <dbReference type="ChEBI" id="CHEBI:78809"/>
        <dbReference type="ChEBI" id="CHEBI:83100"/>
        <dbReference type="EC" id="2.8.1.8"/>
    </reaction>
</comment>
<comment type="cofactor">
    <cofactor evidence="1">
        <name>[4Fe-4S] cluster</name>
        <dbReference type="ChEBI" id="CHEBI:49883"/>
    </cofactor>
    <text evidence="1">Binds 2 [4Fe-4S] clusters per subunit. One cluster is coordinated with 3 cysteines and an exchangeable S-adenosyl-L-methionine.</text>
</comment>
<comment type="pathway">
    <text evidence="1">Protein modification; protein lipoylation via endogenous pathway; protein N(6)-(lipoyl)lysine from octanoyl-[acyl-carrier-protein]: step 2/2.</text>
</comment>
<comment type="subcellular location">
    <subcellularLocation>
        <location evidence="1">Cytoplasm</location>
    </subcellularLocation>
</comment>
<comment type="similarity">
    <text evidence="1">Belongs to the radical SAM superfamily. Lipoyl synthase family.</text>
</comment>
<organism>
    <name type="scientific">Dichelobacter nodosus (strain VCS1703A)</name>
    <dbReference type="NCBI Taxonomy" id="246195"/>
    <lineage>
        <taxon>Bacteria</taxon>
        <taxon>Pseudomonadati</taxon>
        <taxon>Pseudomonadota</taxon>
        <taxon>Gammaproteobacteria</taxon>
        <taxon>Cardiobacteriales</taxon>
        <taxon>Cardiobacteriaceae</taxon>
        <taxon>Dichelobacter</taxon>
    </lineage>
</organism>
<dbReference type="EC" id="2.8.1.8" evidence="1"/>
<dbReference type="EMBL" id="CP000513">
    <property type="protein sequence ID" value="ABQ13223.1"/>
    <property type="molecule type" value="Genomic_DNA"/>
</dbReference>
<dbReference type="RefSeq" id="WP_012030816.1">
    <property type="nucleotide sequence ID" value="NC_009446.1"/>
</dbReference>
<dbReference type="SMR" id="A5EVQ3"/>
<dbReference type="STRING" id="246195.DNO_0480"/>
<dbReference type="KEGG" id="dno:DNO_0480"/>
<dbReference type="eggNOG" id="COG0320">
    <property type="taxonomic scope" value="Bacteria"/>
</dbReference>
<dbReference type="HOGENOM" id="CLU_033144_2_1_6"/>
<dbReference type="OrthoDB" id="9787898at2"/>
<dbReference type="UniPathway" id="UPA00538">
    <property type="reaction ID" value="UER00593"/>
</dbReference>
<dbReference type="Proteomes" id="UP000000248">
    <property type="component" value="Chromosome"/>
</dbReference>
<dbReference type="GO" id="GO:0005737">
    <property type="term" value="C:cytoplasm"/>
    <property type="evidence" value="ECO:0007669"/>
    <property type="project" value="UniProtKB-SubCell"/>
</dbReference>
<dbReference type="GO" id="GO:0051539">
    <property type="term" value="F:4 iron, 4 sulfur cluster binding"/>
    <property type="evidence" value="ECO:0007669"/>
    <property type="project" value="UniProtKB-UniRule"/>
</dbReference>
<dbReference type="GO" id="GO:0016992">
    <property type="term" value="F:lipoate synthase activity"/>
    <property type="evidence" value="ECO:0007669"/>
    <property type="project" value="UniProtKB-UniRule"/>
</dbReference>
<dbReference type="GO" id="GO:0046872">
    <property type="term" value="F:metal ion binding"/>
    <property type="evidence" value="ECO:0007669"/>
    <property type="project" value="UniProtKB-KW"/>
</dbReference>
<dbReference type="CDD" id="cd01335">
    <property type="entry name" value="Radical_SAM"/>
    <property type="match status" value="1"/>
</dbReference>
<dbReference type="FunFam" id="3.20.20.70:FF:000040">
    <property type="entry name" value="Lipoyl synthase"/>
    <property type="match status" value="1"/>
</dbReference>
<dbReference type="Gene3D" id="3.20.20.70">
    <property type="entry name" value="Aldolase class I"/>
    <property type="match status" value="1"/>
</dbReference>
<dbReference type="HAMAP" id="MF_00206">
    <property type="entry name" value="Lipoyl_synth"/>
    <property type="match status" value="1"/>
</dbReference>
<dbReference type="InterPro" id="IPR013785">
    <property type="entry name" value="Aldolase_TIM"/>
</dbReference>
<dbReference type="InterPro" id="IPR006638">
    <property type="entry name" value="Elp3/MiaA/NifB-like_rSAM"/>
</dbReference>
<dbReference type="InterPro" id="IPR031691">
    <property type="entry name" value="LIAS_N"/>
</dbReference>
<dbReference type="InterPro" id="IPR003698">
    <property type="entry name" value="Lipoyl_synth"/>
</dbReference>
<dbReference type="InterPro" id="IPR007197">
    <property type="entry name" value="rSAM"/>
</dbReference>
<dbReference type="NCBIfam" id="TIGR00510">
    <property type="entry name" value="lipA"/>
    <property type="match status" value="1"/>
</dbReference>
<dbReference type="NCBIfam" id="NF004019">
    <property type="entry name" value="PRK05481.1"/>
    <property type="match status" value="1"/>
</dbReference>
<dbReference type="NCBIfam" id="NF009544">
    <property type="entry name" value="PRK12928.1"/>
    <property type="match status" value="1"/>
</dbReference>
<dbReference type="PANTHER" id="PTHR10949">
    <property type="entry name" value="LIPOYL SYNTHASE"/>
    <property type="match status" value="1"/>
</dbReference>
<dbReference type="PANTHER" id="PTHR10949:SF0">
    <property type="entry name" value="LIPOYL SYNTHASE, MITOCHONDRIAL"/>
    <property type="match status" value="1"/>
</dbReference>
<dbReference type="Pfam" id="PF16881">
    <property type="entry name" value="LIAS_N"/>
    <property type="match status" value="1"/>
</dbReference>
<dbReference type="Pfam" id="PF04055">
    <property type="entry name" value="Radical_SAM"/>
    <property type="match status" value="1"/>
</dbReference>
<dbReference type="PIRSF" id="PIRSF005963">
    <property type="entry name" value="Lipoyl_synth"/>
    <property type="match status" value="1"/>
</dbReference>
<dbReference type="SFLD" id="SFLDF00271">
    <property type="entry name" value="lipoyl_synthase"/>
    <property type="match status" value="1"/>
</dbReference>
<dbReference type="SFLD" id="SFLDG01058">
    <property type="entry name" value="lipoyl_synthase_like"/>
    <property type="match status" value="1"/>
</dbReference>
<dbReference type="SMART" id="SM00729">
    <property type="entry name" value="Elp3"/>
    <property type="match status" value="1"/>
</dbReference>
<dbReference type="SUPFAM" id="SSF102114">
    <property type="entry name" value="Radical SAM enzymes"/>
    <property type="match status" value="1"/>
</dbReference>
<dbReference type="PROSITE" id="PS51918">
    <property type="entry name" value="RADICAL_SAM"/>
    <property type="match status" value="1"/>
</dbReference>
<protein>
    <recommendedName>
        <fullName evidence="1">Lipoyl synthase</fullName>
        <ecNumber evidence="1">2.8.1.8</ecNumber>
    </recommendedName>
    <alternativeName>
        <fullName evidence="1">Lip-syn</fullName>
        <shortName evidence="1">LS</shortName>
    </alternativeName>
    <alternativeName>
        <fullName evidence="1">Lipoate synthase</fullName>
    </alternativeName>
    <alternativeName>
        <fullName evidence="1">Lipoic acid synthase</fullName>
    </alternativeName>
    <alternativeName>
        <fullName evidence="1">Sulfur insertion protein LipA</fullName>
    </alternativeName>
</protein>
<gene>
    <name evidence="1" type="primary">lipA</name>
    <name type="ordered locus">DNO_0480</name>
</gene>
<accession>A5EVQ3</accession>
<evidence type="ECO:0000255" key="1">
    <source>
        <dbReference type="HAMAP-Rule" id="MF_00206"/>
    </source>
</evidence>
<evidence type="ECO:0000255" key="2">
    <source>
        <dbReference type="PROSITE-ProRule" id="PRU01266"/>
    </source>
</evidence>
<name>LIPA_DICNV</name>
<proteinExistence type="inferred from homology"/>
<sequence>MAEPIIVKGQKQNAMGVKRKGAEKVRHVAADAEHFEQERLKKPSWIRAKMPTGPEVMRMKAMMREQKLHSVCEEASCPNLGECFRFGTASFMIMGDICTRRCPFCDVAHGRPRPLNPFEPRNLAQTVYNLGLAHVVITSVDRDDLRDGGAAHFAACIREIRRVSPKMTIEILTPDFRGRAELAVQILSATPPDVFNHNLETIPRFYDVVRPGANYERSLHLLRDYKKACPKKIITKSGLMVGLGEEIEEILQVMQDLRSHDVDMLTVGQYLQPSVHHLPVKRYYTPEEFDFLAQEGKKMGFLHVASGAMVRSSYHADRSAQTVL</sequence>